<accession>C1ANR5</accession>
<protein>
    <recommendedName>
        <fullName evidence="1">Large ribosomal subunit protein bL35</fullName>
    </recommendedName>
    <alternativeName>
        <fullName evidence="3">50S ribosomal protein L35</fullName>
    </alternativeName>
</protein>
<dbReference type="EMBL" id="AP010918">
    <property type="protein sequence ID" value="BAH25944.1"/>
    <property type="molecule type" value="Genomic_DNA"/>
</dbReference>
<dbReference type="RefSeq" id="WP_003408106.1">
    <property type="nucleotide sequence ID" value="NZ_CP014566.1"/>
</dbReference>
<dbReference type="SMR" id="C1ANR5"/>
<dbReference type="GeneID" id="45425612"/>
<dbReference type="KEGG" id="mbt:JTY_1656"/>
<dbReference type="HOGENOM" id="CLU_169643_4_2_11"/>
<dbReference type="GO" id="GO:0022625">
    <property type="term" value="C:cytosolic large ribosomal subunit"/>
    <property type="evidence" value="ECO:0007669"/>
    <property type="project" value="TreeGrafter"/>
</dbReference>
<dbReference type="GO" id="GO:0003735">
    <property type="term" value="F:structural constituent of ribosome"/>
    <property type="evidence" value="ECO:0007669"/>
    <property type="project" value="InterPro"/>
</dbReference>
<dbReference type="GO" id="GO:0006412">
    <property type="term" value="P:translation"/>
    <property type="evidence" value="ECO:0007669"/>
    <property type="project" value="UniProtKB-UniRule"/>
</dbReference>
<dbReference type="FunFam" id="4.10.410.60:FF:000001">
    <property type="entry name" value="50S ribosomal protein L35"/>
    <property type="match status" value="1"/>
</dbReference>
<dbReference type="Gene3D" id="4.10.410.60">
    <property type="match status" value="1"/>
</dbReference>
<dbReference type="HAMAP" id="MF_00514">
    <property type="entry name" value="Ribosomal_bL35"/>
    <property type="match status" value="1"/>
</dbReference>
<dbReference type="InterPro" id="IPR001706">
    <property type="entry name" value="Ribosomal_bL35"/>
</dbReference>
<dbReference type="InterPro" id="IPR021137">
    <property type="entry name" value="Ribosomal_bL35-like"/>
</dbReference>
<dbReference type="InterPro" id="IPR018265">
    <property type="entry name" value="Ribosomal_bL35_CS"/>
</dbReference>
<dbReference type="InterPro" id="IPR037229">
    <property type="entry name" value="Ribosomal_bL35_sf"/>
</dbReference>
<dbReference type="NCBIfam" id="TIGR00001">
    <property type="entry name" value="rpmI_bact"/>
    <property type="match status" value="1"/>
</dbReference>
<dbReference type="PANTHER" id="PTHR33343">
    <property type="entry name" value="54S RIBOSOMAL PROTEIN BL35M"/>
    <property type="match status" value="1"/>
</dbReference>
<dbReference type="PANTHER" id="PTHR33343:SF1">
    <property type="entry name" value="LARGE RIBOSOMAL SUBUNIT PROTEIN BL35M"/>
    <property type="match status" value="1"/>
</dbReference>
<dbReference type="Pfam" id="PF01632">
    <property type="entry name" value="Ribosomal_L35p"/>
    <property type="match status" value="1"/>
</dbReference>
<dbReference type="PRINTS" id="PR00064">
    <property type="entry name" value="RIBOSOMALL35"/>
</dbReference>
<dbReference type="SUPFAM" id="SSF143034">
    <property type="entry name" value="L35p-like"/>
    <property type="match status" value="1"/>
</dbReference>
<dbReference type="PROSITE" id="PS00936">
    <property type="entry name" value="RIBOSOMAL_L35"/>
    <property type="match status" value="1"/>
</dbReference>
<keyword id="KW-0687">Ribonucleoprotein</keyword>
<keyword id="KW-0689">Ribosomal protein</keyword>
<evidence type="ECO:0000255" key="1">
    <source>
        <dbReference type="HAMAP-Rule" id="MF_00514"/>
    </source>
</evidence>
<evidence type="ECO:0000256" key="2">
    <source>
        <dbReference type="SAM" id="MobiDB-lite"/>
    </source>
</evidence>
<evidence type="ECO:0000305" key="3"/>
<name>RL35_MYCBT</name>
<sequence length="64" mass="7220">MPKAKTHSGASKRFRRTGTGKIVRQKANRRHLLEHKPSTRTRRLDGRTVVAANDTKRVTSLLNG</sequence>
<proteinExistence type="inferred from homology"/>
<comment type="similarity">
    <text evidence="1">Belongs to the bacterial ribosomal protein bL35 family.</text>
</comment>
<feature type="chain" id="PRO_1000194083" description="Large ribosomal subunit protein bL35">
    <location>
        <begin position="1"/>
        <end position="64"/>
    </location>
</feature>
<feature type="region of interest" description="Disordered" evidence="2">
    <location>
        <begin position="1"/>
        <end position="22"/>
    </location>
</feature>
<reference key="1">
    <citation type="journal article" date="2009" name="Vaccine">
        <title>Whole genome sequence analysis of Mycobacterium bovis bacillus Calmette-Guerin (BCG) Tokyo 172: a comparative study of BCG vaccine substrains.</title>
        <authorList>
            <person name="Seki M."/>
            <person name="Honda I."/>
            <person name="Fujita I."/>
            <person name="Yano I."/>
            <person name="Yamamoto S."/>
            <person name="Koyama A."/>
        </authorList>
    </citation>
    <scope>NUCLEOTIDE SEQUENCE [LARGE SCALE GENOMIC DNA]</scope>
    <source>
        <strain>BCG / Tokyo 172 / ATCC 35737 / TMC 1019</strain>
    </source>
</reference>
<gene>
    <name evidence="1" type="primary">rpmI</name>
    <name type="ordered locus">JTY_1656</name>
</gene>
<organism>
    <name type="scientific">Mycobacterium bovis (strain BCG / Tokyo 172 / ATCC 35737 / TMC 1019)</name>
    <dbReference type="NCBI Taxonomy" id="561275"/>
    <lineage>
        <taxon>Bacteria</taxon>
        <taxon>Bacillati</taxon>
        <taxon>Actinomycetota</taxon>
        <taxon>Actinomycetes</taxon>
        <taxon>Mycobacteriales</taxon>
        <taxon>Mycobacteriaceae</taxon>
        <taxon>Mycobacterium</taxon>
        <taxon>Mycobacterium tuberculosis complex</taxon>
    </lineage>
</organism>